<name>ATPH_GOSBA</name>
<gene>
    <name evidence="1" type="primary">atpH</name>
</gene>
<feature type="chain" id="PRO_0000362918" description="ATP synthase subunit c, chloroplastic">
    <location>
        <begin position="1"/>
        <end position="81"/>
    </location>
</feature>
<feature type="transmembrane region" description="Helical" evidence="1">
    <location>
        <begin position="3"/>
        <end position="23"/>
    </location>
</feature>
<feature type="transmembrane region" description="Helical" evidence="1">
    <location>
        <begin position="57"/>
        <end position="77"/>
    </location>
</feature>
<feature type="site" description="Reversibly protonated during proton transport" evidence="1">
    <location>
        <position position="61"/>
    </location>
</feature>
<dbReference type="EMBL" id="AP009123">
    <property type="protein sequence ID" value="BAF41234.1"/>
    <property type="molecule type" value="Genomic_DNA"/>
</dbReference>
<dbReference type="RefSeq" id="YP_913174.1">
    <property type="nucleotide sequence ID" value="NC_008641.1"/>
</dbReference>
<dbReference type="SMR" id="A0ZZ22"/>
<dbReference type="GeneID" id="4575188"/>
<dbReference type="GO" id="GO:0009535">
    <property type="term" value="C:chloroplast thylakoid membrane"/>
    <property type="evidence" value="ECO:0007669"/>
    <property type="project" value="UniProtKB-SubCell"/>
</dbReference>
<dbReference type="GO" id="GO:0045259">
    <property type="term" value="C:proton-transporting ATP synthase complex"/>
    <property type="evidence" value="ECO:0007669"/>
    <property type="project" value="UniProtKB-KW"/>
</dbReference>
<dbReference type="GO" id="GO:0033177">
    <property type="term" value="C:proton-transporting two-sector ATPase complex, proton-transporting domain"/>
    <property type="evidence" value="ECO:0007669"/>
    <property type="project" value="InterPro"/>
</dbReference>
<dbReference type="GO" id="GO:0008289">
    <property type="term" value="F:lipid binding"/>
    <property type="evidence" value="ECO:0007669"/>
    <property type="project" value="UniProtKB-KW"/>
</dbReference>
<dbReference type="GO" id="GO:0046933">
    <property type="term" value="F:proton-transporting ATP synthase activity, rotational mechanism"/>
    <property type="evidence" value="ECO:0007669"/>
    <property type="project" value="UniProtKB-UniRule"/>
</dbReference>
<dbReference type="CDD" id="cd18183">
    <property type="entry name" value="ATP-synt_Fo_c_ATPH"/>
    <property type="match status" value="1"/>
</dbReference>
<dbReference type="FunFam" id="1.20.20.10:FF:000001">
    <property type="entry name" value="ATP synthase subunit c, chloroplastic"/>
    <property type="match status" value="1"/>
</dbReference>
<dbReference type="Gene3D" id="1.20.20.10">
    <property type="entry name" value="F1F0 ATP synthase subunit C"/>
    <property type="match status" value="1"/>
</dbReference>
<dbReference type="HAMAP" id="MF_01396">
    <property type="entry name" value="ATP_synth_c_bact"/>
    <property type="match status" value="1"/>
</dbReference>
<dbReference type="InterPro" id="IPR005953">
    <property type="entry name" value="ATP_synth_csu_bac/chlpt"/>
</dbReference>
<dbReference type="InterPro" id="IPR000454">
    <property type="entry name" value="ATP_synth_F0_csu"/>
</dbReference>
<dbReference type="InterPro" id="IPR020537">
    <property type="entry name" value="ATP_synth_F0_csu_DDCD_BS"/>
</dbReference>
<dbReference type="InterPro" id="IPR038662">
    <property type="entry name" value="ATP_synth_F0_csu_sf"/>
</dbReference>
<dbReference type="InterPro" id="IPR002379">
    <property type="entry name" value="ATPase_proteolipid_c-like_dom"/>
</dbReference>
<dbReference type="InterPro" id="IPR035921">
    <property type="entry name" value="F/V-ATP_Csub_sf"/>
</dbReference>
<dbReference type="NCBIfam" id="TIGR01260">
    <property type="entry name" value="ATP_synt_c"/>
    <property type="match status" value="1"/>
</dbReference>
<dbReference type="NCBIfam" id="NF005608">
    <property type="entry name" value="PRK07354.1"/>
    <property type="match status" value="1"/>
</dbReference>
<dbReference type="PANTHER" id="PTHR10031">
    <property type="entry name" value="ATP SYNTHASE LIPID-BINDING PROTEIN, MITOCHONDRIAL"/>
    <property type="match status" value="1"/>
</dbReference>
<dbReference type="PANTHER" id="PTHR10031:SF48">
    <property type="entry name" value="ATP SYNTHASE SUBUNIT C, CHLOROPLASTIC"/>
    <property type="match status" value="1"/>
</dbReference>
<dbReference type="Pfam" id="PF00137">
    <property type="entry name" value="ATP-synt_C"/>
    <property type="match status" value="1"/>
</dbReference>
<dbReference type="PRINTS" id="PR00124">
    <property type="entry name" value="ATPASEC"/>
</dbReference>
<dbReference type="SUPFAM" id="SSF81333">
    <property type="entry name" value="F1F0 ATP synthase subunit C"/>
    <property type="match status" value="1"/>
</dbReference>
<dbReference type="PROSITE" id="PS00605">
    <property type="entry name" value="ATPASE_C"/>
    <property type="match status" value="1"/>
</dbReference>
<accession>A0ZZ22</accession>
<organism>
    <name type="scientific">Gossypium barbadense</name>
    <name type="common">Sea Island cotton</name>
    <name type="synonym">Hibiscus barbadensis</name>
    <dbReference type="NCBI Taxonomy" id="3634"/>
    <lineage>
        <taxon>Eukaryota</taxon>
        <taxon>Viridiplantae</taxon>
        <taxon>Streptophyta</taxon>
        <taxon>Embryophyta</taxon>
        <taxon>Tracheophyta</taxon>
        <taxon>Spermatophyta</taxon>
        <taxon>Magnoliopsida</taxon>
        <taxon>eudicotyledons</taxon>
        <taxon>Gunneridae</taxon>
        <taxon>Pentapetalae</taxon>
        <taxon>rosids</taxon>
        <taxon>malvids</taxon>
        <taxon>Malvales</taxon>
        <taxon>Malvaceae</taxon>
        <taxon>Malvoideae</taxon>
        <taxon>Gossypium</taxon>
    </lineage>
</organism>
<protein>
    <recommendedName>
        <fullName evidence="1">ATP synthase subunit c, chloroplastic</fullName>
    </recommendedName>
    <alternativeName>
        <fullName evidence="1">ATP synthase F(0) sector subunit c</fullName>
    </alternativeName>
    <alternativeName>
        <fullName evidence="1">ATPase subunit III</fullName>
    </alternativeName>
    <alternativeName>
        <fullName evidence="1">F-type ATPase subunit c</fullName>
        <shortName evidence="1">F-ATPase subunit c</shortName>
    </alternativeName>
    <alternativeName>
        <fullName evidence="1">Lipid-binding protein</fullName>
    </alternativeName>
</protein>
<keyword id="KW-0066">ATP synthesis</keyword>
<keyword id="KW-0138">CF(0)</keyword>
<keyword id="KW-0150">Chloroplast</keyword>
<keyword id="KW-0375">Hydrogen ion transport</keyword>
<keyword id="KW-0406">Ion transport</keyword>
<keyword id="KW-0446">Lipid-binding</keyword>
<keyword id="KW-0472">Membrane</keyword>
<keyword id="KW-0934">Plastid</keyword>
<keyword id="KW-0793">Thylakoid</keyword>
<keyword id="KW-0812">Transmembrane</keyword>
<keyword id="KW-1133">Transmembrane helix</keyword>
<keyword id="KW-0813">Transport</keyword>
<comment type="function">
    <text evidence="1">F(1)F(0) ATP synthase produces ATP from ADP in the presence of a proton or sodium gradient. F-type ATPases consist of two structural domains, F(1) containing the extramembraneous catalytic core and F(0) containing the membrane proton channel, linked together by a central stalk and a peripheral stalk. During catalysis, ATP synthesis in the catalytic domain of F(1) is coupled via a rotary mechanism of the central stalk subunits to proton translocation.</text>
</comment>
<comment type="function">
    <text evidence="1">Key component of the F(0) channel; it plays a direct role in translocation across the membrane. A homomeric c-ring of between 10-14 subunits forms the central stalk rotor element with the F(1) delta and epsilon subunits.</text>
</comment>
<comment type="subunit">
    <text evidence="1">F-type ATPases have 2 components, F(1) - the catalytic core - and F(0) - the membrane proton channel. F(1) has five subunits: alpha(3), beta(3), gamma(1), delta(1), epsilon(1). F(0) has four main subunits: a(1), b(1), b'(1) and c(10-14). The alpha and beta chains form an alternating ring which encloses part of the gamma chain. F(1) is attached to F(0) by a central stalk formed by the gamma and epsilon chains, while a peripheral stalk is formed by the delta, b and b' chains.</text>
</comment>
<comment type="subcellular location">
    <subcellularLocation>
        <location evidence="1">Plastid</location>
        <location evidence="1">Chloroplast thylakoid membrane</location>
        <topology evidence="1">Multi-pass membrane protein</topology>
    </subcellularLocation>
</comment>
<comment type="miscellaneous">
    <text>In plastids the F-type ATPase is also known as CF(1)CF(0).</text>
</comment>
<comment type="similarity">
    <text evidence="1">Belongs to the ATPase C chain family.</text>
</comment>
<reference key="1">
    <citation type="journal article" date="2006" name="Genes Genet. Syst.">
        <title>Complete nucleotide sequence of the cotton (Gossypium barbadense L.) chloroplast genome with a comparative analysis of sequences among 9 dicot plants.</title>
        <authorList>
            <person name="Ibrahim R.I.H."/>
            <person name="Azuma J."/>
            <person name="Sakamoto M."/>
        </authorList>
    </citation>
    <scope>NUCLEOTIDE SEQUENCE [LARGE SCALE GENOMIC DNA]</scope>
</reference>
<evidence type="ECO:0000255" key="1">
    <source>
        <dbReference type="HAMAP-Rule" id="MF_01396"/>
    </source>
</evidence>
<sequence length="81" mass="7976">MNPLISAASVIAAGLAVGLASIGPGVGQGTAAGQAVEGIARQPEAEGKIRGTLLLSLAFMEALSIYGLVVALALLFANPFV</sequence>
<geneLocation type="chloroplast"/>
<proteinExistence type="inferred from homology"/>